<gene>
    <name type="primary">sra</name>
    <name type="ordered locus">ML0411</name>
    <name type="ORF">MLCL383.14</name>
</gene>
<evidence type="ECO:0000305" key="1"/>
<name>SRA_MYCLE</name>
<proteinExistence type="inferred from homology"/>
<protein>
    <recommendedName>
        <fullName>Serine-rich antigen</fullName>
    </recommendedName>
    <alternativeName>
        <fullName>25L</fullName>
    </alternativeName>
    <alternativeName>
        <fullName>45 kDa protein</fullName>
    </alternativeName>
</protein>
<feature type="chain" id="PRO_0000072181" description="Serine-rich antigen">
    <location>
        <begin position="1"/>
        <end position="408"/>
    </location>
</feature>
<feature type="repeat" description="1">
    <location>
        <begin position="209"/>
        <end position="214"/>
    </location>
</feature>
<feature type="repeat" description="2">
    <location>
        <begin position="230"/>
        <end position="235"/>
    </location>
</feature>
<feature type="region of interest" description="2 X 6 AA repeats of S-V-A-Q-S-E">
    <location>
        <begin position="209"/>
        <end position="235"/>
    </location>
</feature>
<feature type="sequence conflict" description="In Ref. 2; CAA79950." evidence="1" ref="2">
    <original>T</original>
    <variation>S</variation>
    <location>
        <position position="132"/>
    </location>
</feature>
<feature type="sequence conflict" description="In Ref. 2." evidence="1" ref="2">
    <original>S</original>
    <variation>L</variation>
    <location>
        <position position="189"/>
    </location>
</feature>
<feature type="sequence conflict" description="In Ref. 2." evidence="1" ref="2">
    <original>H</original>
    <variation>D</variation>
    <location>
        <position position="191"/>
    </location>
</feature>
<feature type="sequence conflict" description="In Ref. 2; CAA79950." evidence="1" ref="2">
    <original>P</original>
    <variation>L</variation>
    <location>
        <position position="292"/>
    </location>
</feature>
<dbReference type="EMBL" id="U00015">
    <property type="protein sequence ID" value="AAC43220.1"/>
    <property type="molecule type" value="Genomic_DNA"/>
</dbReference>
<dbReference type="EMBL" id="X68431">
    <property type="protein sequence ID" value="CAA48480.1"/>
    <property type="molecule type" value="Genomic_DNA"/>
</dbReference>
<dbReference type="EMBL" id="Z21952">
    <property type="protein sequence ID" value="CAA79950.1"/>
    <property type="molecule type" value="Genomic_DNA"/>
</dbReference>
<dbReference type="EMBL" id="Z97179">
    <property type="protein sequence ID" value="CAB09938.1"/>
    <property type="molecule type" value="Genomic_DNA"/>
</dbReference>
<dbReference type="EMBL" id="AL583918">
    <property type="protein sequence ID" value="CAC29919.1"/>
    <property type="molecule type" value="Genomic_DNA"/>
</dbReference>
<dbReference type="PIR" id="C86960">
    <property type="entry name" value="C86960"/>
</dbReference>
<dbReference type="PIR" id="S33522">
    <property type="entry name" value="S33522"/>
</dbReference>
<dbReference type="PIR" id="S39872">
    <property type="entry name" value="S39872"/>
</dbReference>
<dbReference type="RefSeq" id="NP_301391.1">
    <property type="nucleotide sequence ID" value="NC_002677.1"/>
</dbReference>
<dbReference type="RefSeq" id="WP_010907715.1">
    <property type="nucleotide sequence ID" value="NC_002677.1"/>
</dbReference>
<dbReference type="SMR" id="Q07297"/>
<dbReference type="STRING" id="272631.gene:17574230"/>
<dbReference type="KEGG" id="mle:ML0411"/>
<dbReference type="PATRIC" id="fig|272631.5.peg.699"/>
<dbReference type="Leproma" id="ML0411"/>
<dbReference type="eggNOG" id="COG5651">
    <property type="taxonomic scope" value="Bacteria"/>
</dbReference>
<dbReference type="HOGENOM" id="CLU_674089_0_0_11"/>
<dbReference type="OrthoDB" id="4772941at2"/>
<dbReference type="Proteomes" id="UP000000806">
    <property type="component" value="Chromosome"/>
</dbReference>
<dbReference type="GO" id="GO:0052572">
    <property type="term" value="P:response to host immune response"/>
    <property type="evidence" value="ECO:0007669"/>
    <property type="project" value="TreeGrafter"/>
</dbReference>
<dbReference type="Gene3D" id="1.20.1260.20">
    <property type="entry name" value="PPE superfamily"/>
    <property type="match status" value="1"/>
</dbReference>
<dbReference type="InterPro" id="IPR022171">
    <property type="entry name" value="PPE_C"/>
</dbReference>
<dbReference type="InterPro" id="IPR000030">
    <property type="entry name" value="PPE_dom"/>
</dbReference>
<dbReference type="InterPro" id="IPR038332">
    <property type="entry name" value="PPE_sf"/>
</dbReference>
<dbReference type="PANTHER" id="PTHR46766">
    <property type="entry name" value="GLUTAMINE-RICH PROTEIN 2"/>
    <property type="match status" value="1"/>
</dbReference>
<dbReference type="PANTHER" id="PTHR46766:SF1">
    <property type="entry name" value="GLUTAMINE-RICH PROTEIN 2"/>
    <property type="match status" value="1"/>
</dbReference>
<dbReference type="Pfam" id="PF00823">
    <property type="entry name" value="PPE"/>
    <property type="match status" value="1"/>
</dbReference>
<dbReference type="Pfam" id="PF12484">
    <property type="entry name" value="PPE-SVP"/>
    <property type="match status" value="1"/>
</dbReference>
<dbReference type="SUPFAM" id="SSF140459">
    <property type="entry name" value="PE/PPE dimer-like"/>
    <property type="match status" value="1"/>
</dbReference>
<sequence length="408" mass="42466">MFDFMVYSPEVNAFLMSRGPGSTPLWGAAEAWISLAEQLMEAAQEVSDTIVVAVPASFAGETSDMLASRVSTFVAWLDGNAENAGLIARVLHAVAYAFEEARAGMVPLLTVLGNIIHTMALKAINWFGQVSTTVAALEADYDLMWVQNSTAMTTYRDTVLRETGKMENFEPAPQLVSRYCMDRRDSVNSFHSSSSSDSLYESIDNLYDSVAQSEEHGSDSMSQSYNTCGSVAQSELCDSPFGTPSQSSQSNDLSATSLTQQLGGLDSIISSASASLLTTNSISSSTASSIMPIVASQVTETLGRSQVAVEKMIQSISSTAVSVDVAASKVVAGVGQAVSVGALRVPENWATASQPVMATAHSVPAGCSAITTAVSGPLEGVTQPAEEVLTASVAGGSGTGGPAFNEAV</sequence>
<reference key="1">
    <citation type="journal article" date="1993" name="Infect. Immun.">
        <title>Sequence and immunological characterization of a serine-rich antigen from Mycobacterium leprae.</title>
        <authorList>
            <person name="Vega-Lopez F."/>
            <person name="Brooks L.A."/>
            <person name="Dockrell H.M."/>
            <person name="de Smet K.A.L."/>
            <person name="Thompson J.K."/>
            <person name="Hussain R."/>
            <person name="Stoker N.G."/>
        </authorList>
    </citation>
    <scope>NUCLEOTIDE SEQUENCE [GENOMIC DNA]</scope>
</reference>
<reference key="2">
    <citation type="journal article" date="1993" name="Mol. Microbiol.">
        <title>A Mycobacterium leprae-specific gene encoding an immunologically recognized 45 kDa protein.</title>
        <authorList>
            <person name="Rinke de Wit T.F."/>
            <person name="Clark-Curtiss J.E."/>
            <person name="Abebe F."/>
            <person name="Kolkon A.H.J."/>
            <person name="Jonson A.A.M."/>
            <person name="Thole J.E.R."/>
        </authorList>
    </citation>
    <scope>NUCLEOTIDE SEQUENCE [GENOMIC DNA]</scope>
</reference>
<reference key="3">
    <citation type="journal article" date="2001" name="Nature">
        <title>Massive gene decay in the leprosy bacillus.</title>
        <authorList>
            <person name="Cole S.T."/>
            <person name="Eiglmeier K."/>
            <person name="Parkhill J."/>
            <person name="James K.D."/>
            <person name="Thomson N.R."/>
            <person name="Wheeler P.R."/>
            <person name="Honore N."/>
            <person name="Garnier T."/>
            <person name="Churcher C.M."/>
            <person name="Harris D.E."/>
            <person name="Mungall K.L."/>
            <person name="Basham D."/>
            <person name="Brown D."/>
            <person name="Chillingworth T."/>
            <person name="Connor R."/>
            <person name="Davies R.M."/>
            <person name="Devlin K."/>
            <person name="Duthoy S."/>
            <person name="Feltwell T."/>
            <person name="Fraser A."/>
            <person name="Hamlin N."/>
            <person name="Holroyd S."/>
            <person name="Hornsby T."/>
            <person name="Jagels K."/>
            <person name="Lacroix C."/>
            <person name="Maclean J."/>
            <person name="Moule S."/>
            <person name="Murphy L.D."/>
            <person name="Oliver K."/>
            <person name="Quail M.A."/>
            <person name="Rajandream M.A."/>
            <person name="Rutherford K.M."/>
            <person name="Rutter S."/>
            <person name="Seeger K."/>
            <person name="Simon S."/>
            <person name="Simmonds M."/>
            <person name="Skelton J."/>
            <person name="Squares R."/>
            <person name="Squares S."/>
            <person name="Stevens K."/>
            <person name="Taylor K."/>
            <person name="Whitehead S."/>
            <person name="Woodward J.R."/>
            <person name="Barrell B.G."/>
        </authorList>
    </citation>
    <scope>NUCLEOTIDE SEQUENCE [LARGE SCALE GENOMIC DNA]</scope>
    <source>
        <strain>TN</strain>
    </source>
</reference>
<accession>Q07297</accession>
<keyword id="KW-1185">Reference proteome</keyword>
<keyword id="KW-0677">Repeat</keyword>
<comment type="similarity">
    <text evidence="1">Belongs to the mycobacterial PPE family.</text>
</comment>
<organism>
    <name type="scientific">Mycobacterium leprae (strain TN)</name>
    <dbReference type="NCBI Taxonomy" id="272631"/>
    <lineage>
        <taxon>Bacteria</taxon>
        <taxon>Bacillati</taxon>
        <taxon>Actinomycetota</taxon>
        <taxon>Actinomycetes</taxon>
        <taxon>Mycobacteriales</taxon>
        <taxon>Mycobacteriaceae</taxon>
        <taxon>Mycobacterium</taxon>
    </lineage>
</organism>